<accession>Q4KK16</accession>
<gene>
    <name evidence="1" type="primary">tauB</name>
    <name type="ordered locus">PFL_0271</name>
</gene>
<organism>
    <name type="scientific">Pseudomonas fluorescens (strain ATCC BAA-477 / NRRL B-23932 / Pf-5)</name>
    <dbReference type="NCBI Taxonomy" id="220664"/>
    <lineage>
        <taxon>Bacteria</taxon>
        <taxon>Pseudomonadati</taxon>
        <taxon>Pseudomonadota</taxon>
        <taxon>Gammaproteobacteria</taxon>
        <taxon>Pseudomonadales</taxon>
        <taxon>Pseudomonadaceae</taxon>
        <taxon>Pseudomonas</taxon>
    </lineage>
</organism>
<name>TAUB_PSEF5</name>
<proteinExistence type="inferred from homology"/>
<reference key="1">
    <citation type="journal article" date="2005" name="Nat. Biotechnol.">
        <title>Complete genome sequence of the plant commensal Pseudomonas fluorescens Pf-5.</title>
        <authorList>
            <person name="Paulsen I.T."/>
            <person name="Press C.M."/>
            <person name="Ravel J."/>
            <person name="Kobayashi D.Y."/>
            <person name="Myers G.S.A."/>
            <person name="Mavrodi D.V."/>
            <person name="DeBoy R.T."/>
            <person name="Seshadri R."/>
            <person name="Ren Q."/>
            <person name="Madupu R."/>
            <person name="Dodson R.J."/>
            <person name="Durkin A.S."/>
            <person name="Brinkac L.M."/>
            <person name="Daugherty S.C."/>
            <person name="Sullivan S.A."/>
            <person name="Rosovitz M.J."/>
            <person name="Gwinn M.L."/>
            <person name="Zhou L."/>
            <person name="Schneider D.J."/>
            <person name="Cartinhour S.W."/>
            <person name="Nelson W.C."/>
            <person name="Weidman J."/>
            <person name="Watkins K."/>
            <person name="Tran K."/>
            <person name="Khouri H."/>
            <person name="Pierson E.A."/>
            <person name="Pierson L.S. III"/>
            <person name="Thomashow L.S."/>
            <person name="Loper J.E."/>
        </authorList>
    </citation>
    <scope>NUCLEOTIDE SEQUENCE [LARGE SCALE GENOMIC DNA]</scope>
    <source>
        <strain>ATCC BAA-477 / NRRL B-23932 / Pf-5</strain>
    </source>
</reference>
<evidence type="ECO:0000255" key="1">
    <source>
        <dbReference type="HAMAP-Rule" id="MF_01714"/>
    </source>
</evidence>
<feature type="chain" id="PRO_0000275835" description="Taurine import ATP-binding protein TauB">
    <location>
        <begin position="1"/>
        <end position="264"/>
    </location>
</feature>
<feature type="domain" description="ABC transporter" evidence="1">
    <location>
        <begin position="4"/>
        <end position="233"/>
    </location>
</feature>
<feature type="binding site" evidence="1">
    <location>
        <begin position="38"/>
        <end position="45"/>
    </location>
    <ligand>
        <name>ATP</name>
        <dbReference type="ChEBI" id="CHEBI:30616"/>
    </ligand>
</feature>
<sequence length="264" mass="28905">MALLQLERISAQYPGAAEPVLADISLTLGPQQLLVALGPSGSGKTSLLNLIAGFVEPSAGRIQLDGVPVQGPSAERGVVFQDDALLPWQDVLGNVAFGLELAGVARDKREARAREMLALVDLAGFDKRRIWQLSGGQKQRVGLARALAADPRVLLMDEPFGALDAFTREQMQELLLQVWRRTAKPVFLITHDIEEAVFLATDLILLAPNPGQIVERLNLDFGQRYAAGESARAIKSDPRFIETREHVLARVFSQRSATQQQERP</sequence>
<dbReference type="EC" id="7.6.2.7" evidence="1"/>
<dbReference type="EMBL" id="CP000076">
    <property type="protein sequence ID" value="AAY95682.1"/>
    <property type="molecule type" value="Genomic_DNA"/>
</dbReference>
<dbReference type="RefSeq" id="WP_011058651.1">
    <property type="nucleotide sequence ID" value="NC_004129.6"/>
</dbReference>
<dbReference type="SMR" id="Q4KK16"/>
<dbReference type="STRING" id="220664.PFL_0271"/>
<dbReference type="GeneID" id="57473259"/>
<dbReference type="KEGG" id="pfl:PFL_0271"/>
<dbReference type="PATRIC" id="fig|220664.5.peg.277"/>
<dbReference type="eggNOG" id="COG4525">
    <property type="taxonomic scope" value="Bacteria"/>
</dbReference>
<dbReference type="HOGENOM" id="CLU_000604_1_22_6"/>
<dbReference type="Proteomes" id="UP000008540">
    <property type="component" value="Chromosome"/>
</dbReference>
<dbReference type="GO" id="GO:0005886">
    <property type="term" value="C:plasma membrane"/>
    <property type="evidence" value="ECO:0007669"/>
    <property type="project" value="UniProtKB-SubCell"/>
</dbReference>
<dbReference type="GO" id="GO:0015411">
    <property type="term" value="F:ABC-type taurine transporter transporter activity"/>
    <property type="evidence" value="ECO:0007669"/>
    <property type="project" value="UniProtKB-EC"/>
</dbReference>
<dbReference type="GO" id="GO:0005524">
    <property type="term" value="F:ATP binding"/>
    <property type="evidence" value="ECO:0007669"/>
    <property type="project" value="UniProtKB-KW"/>
</dbReference>
<dbReference type="GO" id="GO:0016887">
    <property type="term" value="F:ATP hydrolysis activity"/>
    <property type="evidence" value="ECO:0007669"/>
    <property type="project" value="InterPro"/>
</dbReference>
<dbReference type="CDD" id="cd03293">
    <property type="entry name" value="ABC_NrtD_SsuB_transporters"/>
    <property type="match status" value="1"/>
</dbReference>
<dbReference type="Gene3D" id="3.40.50.300">
    <property type="entry name" value="P-loop containing nucleotide triphosphate hydrolases"/>
    <property type="match status" value="1"/>
</dbReference>
<dbReference type="InterPro" id="IPR003593">
    <property type="entry name" value="AAA+_ATPase"/>
</dbReference>
<dbReference type="InterPro" id="IPR003439">
    <property type="entry name" value="ABC_transporter-like_ATP-bd"/>
</dbReference>
<dbReference type="InterPro" id="IPR017871">
    <property type="entry name" value="ABC_transporter-like_CS"/>
</dbReference>
<dbReference type="InterPro" id="IPR050166">
    <property type="entry name" value="ABC_transporter_ATP-bind"/>
</dbReference>
<dbReference type="InterPro" id="IPR027417">
    <property type="entry name" value="P-loop_NTPase"/>
</dbReference>
<dbReference type="NCBIfam" id="NF008421">
    <property type="entry name" value="PRK11248.1"/>
    <property type="match status" value="1"/>
</dbReference>
<dbReference type="PANTHER" id="PTHR42788:SF18">
    <property type="entry name" value="TAURINE IMPORT ATP-BINDING PROTEIN TAUB"/>
    <property type="match status" value="1"/>
</dbReference>
<dbReference type="PANTHER" id="PTHR42788">
    <property type="entry name" value="TAURINE IMPORT ATP-BINDING PROTEIN-RELATED"/>
    <property type="match status" value="1"/>
</dbReference>
<dbReference type="Pfam" id="PF00005">
    <property type="entry name" value="ABC_tran"/>
    <property type="match status" value="1"/>
</dbReference>
<dbReference type="SMART" id="SM00382">
    <property type="entry name" value="AAA"/>
    <property type="match status" value="1"/>
</dbReference>
<dbReference type="SUPFAM" id="SSF52540">
    <property type="entry name" value="P-loop containing nucleoside triphosphate hydrolases"/>
    <property type="match status" value="1"/>
</dbReference>
<dbReference type="PROSITE" id="PS00211">
    <property type="entry name" value="ABC_TRANSPORTER_1"/>
    <property type="match status" value="1"/>
</dbReference>
<dbReference type="PROSITE" id="PS50893">
    <property type="entry name" value="ABC_TRANSPORTER_2"/>
    <property type="match status" value="1"/>
</dbReference>
<dbReference type="PROSITE" id="PS51250">
    <property type="entry name" value="TAUB"/>
    <property type="match status" value="1"/>
</dbReference>
<comment type="function">
    <text evidence="1">Part of the ABC transporter complex TauABC involved in taurine import. Responsible for energy coupling to the transport system.</text>
</comment>
<comment type="catalytic activity">
    <reaction evidence="1">
        <text>taurine(out) + ATP + H2O = taurine(in) + ADP + phosphate + H(+)</text>
        <dbReference type="Rhea" id="RHEA:14613"/>
        <dbReference type="ChEBI" id="CHEBI:15377"/>
        <dbReference type="ChEBI" id="CHEBI:15378"/>
        <dbReference type="ChEBI" id="CHEBI:30616"/>
        <dbReference type="ChEBI" id="CHEBI:43474"/>
        <dbReference type="ChEBI" id="CHEBI:456216"/>
        <dbReference type="ChEBI" id="CHEBI:507393"/>
        <dbReference type="EC" id="7.6.2.7"/>
    </reaction>
</comment>
<comment type="subunit">
    <text evidence="1">The complex is composed of two ATP-binding proteins (TauB), two transmembrane proteins (TauC) and a solute-binding protein (TauA).</text>
</comment>
<comment type="subcellular location">
    <subcellularLocation>
        <location evidence="1">Cell inner membrane</location>
        <topology evidence="1">Peripheral membrane protein</topology>
    </subcellularLocation>
</comment>
<comment type="similarity">
    <text evidence="1">Belongs to the ABC transporter superfamily. Taurine importer (TC 3.A.1.17.1) family.</text>
</comment>
<protein>
    <recommendedName>
        <fullName evidence="1">Taurine import ATP-binding protein TauB</fullName>
        <ecNumber evidence="1">7.6.2.7</ecNumber>
    </recommendedName>
</protein>
<keyword id="KW-0067">ATP-binding</keyword>
<keyword id="KW-0997">Cell inner membrane</keyword>
<keyword id="KW-1003">Cell membrane</keyword>
<keyword id="KW-0472">Membrane</keyword>
<keyword id="KW-0547">Nucleotide-binding</keyword>
<keyword id="KW-1278">Translocase</keyword>
<keyword id="KW-0813">Transport</keyword>